<keyword id="KW-0143">Chaperone</keyword>
<keyword id="KW-0963">Cytoplasm</keyword>
<keyword id="KW-0342">GTP-binding</keyword>
<keyword id="KW-0996">Nickel insertion</keyword>
<keyword id="KW-0547">Nucleotide-binding</keyword>
<sequence length="204" mass="22345">MANPIKIGIGGPVGAGKTQLIEKVVKRLSKEMSIGVITNDIYTKEDEKILVNSGVLPESRIIGVETGGCPHTAIREDASMNFAAIDELLERHDDIELIFIESGGDNLAATFSPELVDFSIYIIDVAQGEKIPRKGGQGMIKSDFFVINKTDLAPYVGASLEQMAEDTKVFRGKRPFTFTNLKTDEGLDEVIDWIERDTLLKGLS</sequence>
<protein>
    <recommendedName>
        <fullName evidence="1">Urease accessory protein UreG</fullName>
    </recommendedName>
</protein>
<name>UREG_STAA3</name>
<feature type="chain" id="PRO_1000145224" description="Urease accessory protein UreG">
    <location>
        <begin position="1"/>
        <end position="204"/>
    </location>
</feature>
<feature type="binding site" evidence="1">
    <location>
        <begin position="11"/>
        <end position="18"/>
    </location>
    <ligand>
        <name>GTP</name>
        <dbReference type="ChEBI" id="CHEBI:37565"/>
    </ligand>
</feature>
<evidence type="ECO:0000255" key="1">
    <source>
        <dbReference type="HAMAP-Rule" id="MF_01389"/>
    </source>
</evidence>
<reference key="1">
    <citation type="journal article" date="2006" name="Lancet">
        <title>Complete genome sequence of USA300, an epidemic clone of community-acquired meticillin-resistant Staphylococcus aureus.</title>
        <authorList>
            <person name="Diep B.A."/>
            <person name="Gill S.R."/>
            <person name="Chang R.F."/>
            <person name="Phan T.H."/>
            <person name="Chen J.H."/>
            <person name="Davidson M.G."/>
            <person name="Lin F."/>
            <person name="Lin J."/>
            <person name="Carleton H.A."/>
            <person name="Mongodin E.F."/>
            <person name="Sensabaugh G.F."/>
            <person name="Perdreau-Remington F."/>
        </authorList>
    </citation>
    <scope>NUCLEOTIDE SEQUENCE [LARGE SCALE GENOMIC DNA]</scope>
    <source>
        <strain>USA300</strain>
    </source>
</reference>
<proteinExistence type="inferred from homology"/>
<comment type="function">
    <text evidence="1">Facilitates the functional incorporation of the urease nickel metallocenter. This process requires GTP hydrolysis, probably effectuated by UreG.</text>
</comment>
<comment type="subunit">
    <text evidence="1">Homodimer. UreD, UreF and UreG form a complex that acts as a GTP-hydrolysis-dependent molecular chaperone, activating the urease apoprotein by helping to assemble the nickel containing metallocenter of UreC. The UreE protein probably delivers the nickel.</text>
</comment>
<comment type="subcellular location">
    <subcellularLocation>
        <location evidence="1">Cytoplasm</location>
    </subcellularLocation>
</comment>
<comment type="similarity">
    <text evidence="1">Belongs to the SIMIBI class G3E GTPase family. UreG subfamily.</text>
</comment>
<gene>
    <name evidence="1" type="primary">ureG</name>
    <name type="ordered locus">SAUSA300_2243</name>
</gene>
<dbReference type="EMBL" id="CP000255">
    <property type="protein sequence ID" value="ABD21896.1"/>
    <property type="molecule type" value="Genomic_DNA"/>
</dbReference>
<dbReference type="RefSeq" id="WP_000002973.1">
    <property type="nucleotide sequence ID" value="NZ_CP027476.1"/>
</dbReference>
<dbReference type="SMR" id="Q2FEK0"/>
<dbReference type="KEGG" id="saa:SAUSA300_2243"/>
<dbReference type="HOGENOM" id="CLU_072144_1_0_9"/>
<dbReference type="OMA" id="KMRGDKP"/>
<dbReference type="Proteomes" id="UP000001939">
    <property type="component" value="Chromosome"/>
</dbReference>
<dbReference type="GO" id="GO:0005737">
    <property type="term" value="C:cytoplasm"/>
    <property type="evidence" value="ECO:0007669"/>
    <property type="project" value="UniProtKB-SubCell"/>
</dbReference>
<dbReference type="GO" id="GO:0005525">
    <property type="term" value="F:GTP binding"/>
    <property type="evidence" value="ECO:0007669"/>
    <property type="project" value="UniProtKB-KW"/>
</dbReference>
<dbReference type="GO" id="GO:0003924">
    <property type="term" value="F:GTPase activity"/>
    <property type="evidence" value="ECO:0007669"/>
    <property type="project" value="InterPro"/>
</dbReference>
<dbReference type="GO" id="GO:0016151">
    <property type="term" value="F:nickel cation binding"/>
    <property type="evidence" value="ECO:0007669"/>
    <property type="project" value="UniProtKB-UniRule"/>
</dbReference>
<dbReference type="GO" id="GO:0043419">
    <property type="term" value="P:urea catabolic process"/>
    <property type="evidence" value="ECO:0007669"/>
    <property type="project" value="InterPro"/>
</dbReference>
<dbReference type="CDD" id="cd05540">
    <property type="entry name" value="UreG"/>
    <property type="match status" value="1"/>
</dbReference>
<dbReference type="Gene3D" id="3.40.50.300">
    <property type="entry name" value="P-loop containing nucleotide triphosphate hydrolases"/>
    <property type="match status" value="1"/>
</dbReference>
<dbReference type="HAMAP" id="MF_01389">
    <property type="entry name" value="UreG"/>
    <property type="match status" value="1"/>
</dbReference>
<dbReference type="InterPro" id="IPR003495">
    <property type="entry name" value="CobW/HypB/UreG_nucleotide-bd"/>
</dbReference>
<dbReference type="InterPro" id="IPR027417">
    <property type="entry name" value="P-loop_NTPase"/>
</dbReference>
<dbReference type="InterPro" id="IPR004400">
    <property type="entry name" value="UreG"/>
</dbReference>
<dbReference type="NCBIfam" id="TIGR00101">
    <property type="entry name" value="ureG"/>
    <property type="match status" value="1"/>
</dbReference>
<dbReference type="PANTHER" id="PTHR31715">
    <property type="entry name" value="UREASE ACCESSORY PROTEIN G"/>
    <property type="match status" value="1"/>
</dbReference>
<dbReference type="PANTHER" id="PTHR31715:SF0">
    <property type="entry name" value="UREASE ACCESSORY PROTEIN G"/>
    <property type="match status" value="1"/>
</dbReference>
<dbReference type="Pfam" id="PF02492">
    <property type="entry name" value="cobW"/>
    <property type="match status" value="1"/>
</dbReference>
<dbReference type="PIRSF" id="PIRSF005624">
    <property type="entry name" value="Ni-bind_GTPase"/>
    <property type="match status" value="1"/>
</dbReference>
<dbReference type="SUPFAM" id="SSF52540">
    <property type="entry name" value="P-loop containing nucleoside triphosphate hydrolases"/>
    <property type="match status" value="1"/>
</dbReference>
<accession>Q2FEK0</accession>
<organism>
    <name type="scientific">Staphylococcus aureus (strain USA300)</name>
    <dbReference type="NCBI Taxonomy" id="367830"/>
    <lineage>
        <taxon>Bacteria</taxon>
        <taxon>Bacillati</taxon>
        <taxon>Bacillota</taxon>
        <taxon>Bacilli</taxon>
        <taxon>Bacillales</taxon>
        <taxon>Staphylococcaceae</taxon>
        <taxon>Staphylococcus</taxon>
    </lineage>
</organism>